<feature type="chain" id="PRO_1000214514" description="Large ribosomal subunit protein uL3">
    <location>
        <begin position="1"/>
        <end position="209"/>
    </location>
</feature>
<feature type="region of interest" description="Disordered" evidence="2">
    <location>
        <begin position="126"/>
        <end position="148"/>
    </location>
</feature>
<reference key="1">
    <citation type="journal article" date="2012" name="BMC Genomics">
        <title>Comparative genomics and transcriptomics of lineages I, II, and III strains of Listeria monocytogenes.</title>
        <authorList>
            <person name="Hain T."/>
            <person name="Ghai R."/>
            <person name="Billion A."/>
            <person name="Kuenne C.T."/>
            <person name="Steinweg C."/>
            <person name="Izar B."/>
            <person name="Mohamed W."/>
            <person name="Mraheil M."/>
            <person name="Domann E."/>
            <person name="Schaffrath S."/>
            <person name="Karst U."/>
            <person name="Goesmann A."/>
            <person name="Oehm S."/>
            <person name="Puhler A."/>
            <person name="Merkl R."/>
            <person name="Vorwerk S."/>
            <person name="Glaser P."/>
            <person name="Garrido P."/>
            <person name="Rusniok C."/>
            <person name="Buchrieser C."/>
            <person name="Goebel W."/>
            <person name="Chakraborty T."/>
        </authorList>
    </citation>
    <scope>NUCLEOTIDE SEQUENCE [LARGE SCALE GENOMIC DNA]</scope>
    <source>
        <strain>CLIP80459</strain>
    </source>
</reference>
<evidence type="ECO:0000255" key="1">
    <source>
        <dbReference type="HAMAP-Rule" id="MF_01325"/>
    </source>
</evidence>
<evidence type="ECO:0000256" key="2">
    <source>
        <dbReference type="SAM" id="MobiDB-lite"/>
    </source>
</evidence>
<evidence type="ECO:0000305" key="3"/>
<proteinExistence type="inferred from homology"/>
<organism>
    <name type="scientific">Listeria monocytogenes serotype 4b (strain CLIP80459)</name>
    <dbReference type="NCBI Taxonomy" id="568819"/>
    <lineage>
        <taxon>Bacteria</taxon>
        <taxon>Bacillati</taxon>
        <taxon>Bacillota</taxon>
        <taxon>Bacilli</taxon>
        <taxon>Bacillales</taxon>
        <taxon>Listeriaceae</taxon>
        <taxon>Listeria</taxon>
    </lineage>
</organism>
<gene>
    <name evidence="1" type="primary">rplC</name>
    <name type="ordered locus">Lm4b_02599</name>
</gene>
<accession>C1KZI0</accession>
<keyword id="KW-0687">Ribonucleoprotein</keyword>
<keyword id="KW-0689">Ribosomal protein</keyword>
<keyword id="KW-0694">RNA-binding</keyword>
<keyword id="KW-0699">rRNA-binding</keyword>
<name>RL3_LISMC</name>
<sequence>MTKGILGRKVGMTQVFTENGELIPVTVIEAAQNVVLQKKTVETDGYEAVQIGFEDKRAILSNKPEQGHVAKANTTPKRFIREFRDVNLDEYEIGAEVKVDVFAEGDIIDATGVSKGKGFQGVIKRHGQSRGPMAHGSRYHRRPGSMGPVAPNRVFKNKLLPGRMGGEQITIQNLEIVKVDVEKNVLLVKGNVPGAKKALVQIKTATKAK</sequence>
<dbReference type="EMBL" id="FM242711">
    <property type="protein sequence ID" value="CAS06353.1"/>
    <property type="molecule type" value="Genomic_DNA"/>
</dbReference>
<dbReference type="RefSeq" id="WP_003726733.1">
    <property type="nucleotide sequence ID" value="NC_012488.1"/>
</dbReference>
<dbReference type="SMR" id="C1KZI0"/>
<dbReference type="GeneID" id="93240513"/>
<dbReference type="KEGG" id="lmc:Lm4b_02599"/>
<dbReference type="HOGENOM" id="CLU_044142_4_1_9"/>
<dbReference type="GO" id="GO:0022625">
    <property type="term" value="C:cytosolic large ribosomal subunit"/>
    <property type="evidence" value="ECO:0007669"/>
    <property type="project" value="TreeGrafter"/>
</dbReference>
<dbReference type="GO" id="GO:0019843">
    <property type="term" value="F:rRNA binding"/>
    <property type="evidence" value="ECO:0007669"/>
    <property type="project" value="UniProtKB-UniRule"/>
</dbReference>
<dbReference type="GO" id="GO:0003735">
    <property type="term" value="F:structural constituent of ribosome"/>
    <property type="evidence" value="ECO:0007669"/>
    <property type="project" value="InterPro"/>
</dbReference>
<dbReference type="GO" id="GO:0006412">
    <property type="term" value="P:translation"/>
    <property type="evidence" value="ECO:0007669"/>
    <property type="project" value="UniProtKB-UniRule"/>
</dbReference>
<dbReference type="FunFam" id="2.40.30.10:FF:000004">
    <property type="entry name" value="50S ribosomal protein L3"/>
    <property type="match status" value="1"/>
</dbReference>
<dbReference type="FunFam" id="3.30.160.810:FF:000002">
    <property type="entry name" value="50S ribosomal protein L3"/>
    <property type="match status" value="1"/>
</dbReference>
<dbReference type="Gene3D" id="3.30.160.810">
    <property type="match status" value="1"/>
</dbReference>
<dbReference type="Gene3D" id="2.40.30.10">
    <property type="entry name" value="Translation factors"/>
    <property type="match status" value="1"/>
</dbReference>
<dbReference type="HAMAP" id="MF_01325_B">
    <property type="entry name" value="Ribosomal_uL3_B"/>
    <property type="match status" value="1"/>
</dbReference>
<dbReference type="InterPro" id="IPR000597">
    <property type="entry name" value="Ribosomal_uL3"/>
</dbReference>
<dbReference type="InterPro" id="IPR019927">
    <property type="entry name" value="Ribosomal_uL3_bac/org-type"/>
</dbReference>
<dbReference type="InterPro" id="IPR019926">
    <property type="entry name" value="Ribosomal_uL3_CS"/>
</dbReference>
<dbReference type="InterPro" id="IPR009000">
    <property type="entry name" value="Transl_B-barrel_sf"/>
</dbReference>
<dbReference type="NCBIfam" id="TIGR03625">
    <property type="entry name" value="L3_bact"/>
    <property type="match status" value="1"/>
</dbReference>
<dbReference type="PANTHER" id="PTHR11229">
    <property type="entry name" value="50S RIBOSOMAL PROTEIN L3"/>
    <property type="match status" value="1"/>
</dbReference>
<dbReference type="PANTHER" id="PTHR11229:SF16">
    <property type="entry name" value="LARGE RIBOSOMAL SUBUNIT PROTEIN UL3C"/>
    <property type="match status" value="1"/>
</dbReference>
<dbReference type="Pfam" id="PF00297">
    <property type="entry name" value="Ribosomal_L3"/>
    <property type="match status" value="1"/>
</dbReference>
<dbReference type="SUPFAM" id="SSF50447">
    <property type="entry name" value="Translation proteins"/>
    <property type="match status" value="1"/>
</dbReference>
<dbReference type="PROSITE" id="PS00474">
    <property type="entry name" value="RIBOSOMAL_L3"/>
    <property type="match status" value="1"/>
</dbReference>
<protein>
    <recommendedName>
        <fullName evidence="1">Large ribosomal subunit protein uL3</fullName>
    </recommendedName>
    <alternativeName>
        <fullName evidence="3">50S ribosomal protein L3</fullName>
    </alternativeName>
</protein>
<comment type="function">
    <text evidence="1">One of the primary rRNA binding proteins, it binds directly near the 3'-end of the 23S rRNA, where it nucleates assembly of the 50S subunit.</text>
</comment>
<comment type="subunit">
    <text evidence="1">Part of the 50S ribosomal subunit. Forms a cluster with proteins L14 and L19.</text>
</comment>
<comment type="similarity">
    <text evidence="1">Belongs to the universal ribosomal protein uL3 family.</text>
</comment>